<name>MTL32_CANGA</name>
<organism>
    <name type="scientific">Candida glabrata (strain ATCC 2001 / BCRC 20586 / JCM 3761 / NBRC 0622 / NRRL Y-65 / CBS 138)</name>
    <name type="common">Yeast</name>
    <name type="synonym">Nakaseomyces glabratus</name>
    <dbReference type="NCBI Taxonomy" id="284593"/>
    <lineage>
        <taxon>Eukaryota</taxon>
        <taxon>Fungi</taxon>
        <taxon>Dikarya</taxon>
        <taxon>Ascomycota</taxon>
        <taxon>Saccharomycotina</taxon>
        <taxon>Saccharomycetes</taxon>
        <taxon>Saccharomycetales</taxon>
        <taxon>Saccharomycetaceae</taxon>
        <taxon>Nakaseomyces</taxon>
    </lineage>
</organism>
<keyword id="KW-0238">DNA-binding</keyword>
<keyword id="KW-0371">Homeobox</keyword>
<keyword id="KW-0539">Nucleus</keyword>
<keyword id="KW-1185">Reference proteome</keyword>
<accession>Q870I4</accession>
<accession>Q6FX73</accession>
<reference key="1">
    <citation type="journal article" date="2003" name="Eukaryot. Cell">
        <title>Three mating type-like loci in Candida glabrata.</title>
        <authorList>
            <person name="Srikantha T."/>
            <person name="Lachke S.A."/>
            <person name="Soll D.R."/>
        </authorList>
    </citation>
    <scope>NUCLEOTIDE SEQUENCE [GENOMIC DNA]</scope>
    <source>
        <strain>7549</strain>
    </source>
</reference>
<reference key="2">
    <citation type="journal article" date="2004" name="Nature">
        <title>Genome evolution in yeasts.</title>
        <authorList>
            <person name="Dujon B."/>
            <person name="Sherman D."/>
            <person name="Fischer G."/>
            <person name="Durrens P."/>
            <person name="Casaregola S."/>
            <person name="Lafontaine I."/>
            <person name="de Montigny J."/>
            <person name="Marck C."/>
            <person name="Neuveglise C."/>
            <person name="Talla E."/>
            <person name="Goffard N."/>
            <person name="Frangeul L."/>
            <person name="Aigle M."/>
            <person name="Anthouard V."/>
            <person name="Babour A."/>
            <person name="Barbe V."/>
            <person name="Barnay S."/>
            <person name="Blanchin S."/>
            <person name="Beckerich J.-M."/>
            <person name="Beyne E."/>
            <person name="Bleykasten C."/>
            <person name="Boisrame A."/>
            <person name="Boyer J."/>
            <person name="Cattolico L."/>
            <person name="Confanioleri F."/>
            <person name="de Daruvar A."/>
            <person name="Despons L."/>
            <person name="Fabre E."/>
            <person name="Fairhead C."/>
            <person name="Ferry-Dumazet H."/>
            <person name="Groppi A."/>
            <person name="Hantraye F."/>
            <person name="Hennequin C."/>
            <person name="Jauniaux N."/>
            <person name="Joyet P."/>
            <person name="Kachouri R."/>
            <person name="Kerrest A."/>
            <person name="Koszul R."/>
            <person name="Lemaire M."/>
            <person name="Lesur I."/>
            <person name="Ma L."/>
            <person name="Muller H."/>
            <person name="Nicaud J.-M."/>
            <person name="Nikolski M."/>
            <person name="Oztas S."/>
            <person name="Ozier-Kalogeropoulos O."/>
            <person name="Pellenz S."/>
            <person name="Potier S."/>
            <person name="Richard G.-F."/>
            <person name="Straub M.-L."/>
            <person name="Suleau A."/>
            <person name="Swennen D."/>
            <person name="Tekaia F."/>
            <person name="Wesolowski-Louvel M."/>
            <person name="Westhof E."/>
            <person name="Wirth B."/>
            <person name="Zeniou-Meyer M."/>
            <person name="Zivanovic Y."/>
            <person name="Bolotin-Fukuhara M."/>
            <person name="Thierry A."/>
            <person name="Bouchier C."/>
            <person name="Caudron B."/>
            <person name="Scarpelli C."/>
            <person name="Gaillardin C."/>
            <person name="Weissenbach J."/>
            <person name="Wincker P."/>
            <person name="Souciet J.-L."/>
        </authorList>
    </citation>
    <scope>NUCLEOTIDE SEQUENCE [LARGE SCALE GENOMIC DNA]</scope>
    <source>
        <strain>ATCC 2001 / BCRC 20586 / JCM 3761 / NBRC 0622 / NRRL Y-65 / CBS 138</strain>
    </source>
</reference>
<sequence length="210" mass="24663">MSKKSRISITHLLNPIQEENLKEKLQEINNQLISLCSSLPKRQSLPGPSSDILRFLSRNNLDPQEIGLIKTTYRLSTLLSKLREHEIVFNVVTKDHLLKKGVPNHYAASYRGHRFTRENVQILETWYRNHIDNPYLDHNSQQYLAQKTNLSKIQIKNWVANRRRKQKSIYISLFDIHNIESGEYAYIEKVCYIIIIICHLFLVFSLSCLT</sequence>
<protein>
    <recommendedName>
        <fullName>Mating-type-like protein ALPHA2, silenced copy at MTL3</fullName>
    </recommendedName>
    <alternativeName>
        <fullName>MTL3alpha2 protein</fullName>
    </alternativeName>
</protein>
<evidence type="ECO:0000255" key="1">
    <source>
        <dbReference type="PROSITE-ProRule" id="PRU00108"/>
    </source>
</evidence>
<evidence type="ECO:0000305" key="2"/>
<feature type="chain" id="PRO_0000049176" description="Mating-type-like protein ALPHA2, silenced copy at MTL3">
    <location>
        <begin position="1"/>
        <end position="210"/>
    </location>
</feature>
<feature type="DNA-binding region" description="Homeobox; TALE-type" evidence="1">
    <location>
        <begin position="108"/>
        <end position="170"/>
    </location>
</feature>
<proteinExistence type="inferred from homology"/>
<comment type="function">
    <text>Mating type proteins are sequence specific DNA-binding proteins that act as master switches in yeast differentiation by controlling gene expression in a cell type-specific fashion.</text>
</comment>
<comment type="subcellular location">
    <subcellularLocation>
        <location evidence="1">Nucleus</location>
    </subcellularLocation>
</comment>
<comment type="miscellaneous">
    <text>There are three genetic loci for mating type genes in C.glabrata. MTL1 seems to be the expression locus that determines the mating type of the cell, whereas MTL2 (containing MTL2A1) and MTL3 (containing MTL3ALPHA1 and MTL3ALPHA2) appear to represent silenced repositories of mating type information. Notably, MTL3ALPHA2 contains a unique stretch coding for 22 amino acids at the C-terminus that is not shared by MTL1ALPHA2.</text>
</comment>
<comment type="miscellaneous">
    <text>Haploid C.glabrata strains can switch mating type, however, neither mating nor diploid forms of C.glabrata have been observed so far.</text>
</comment>
<comment type="similarity">
    <text evidence="2">Belongs to the TALE/M-ATYP homeobox family.</text>
</comment>
<gene>
    <name type="primary">MTL3alpha2</name>
    <name type="ordered locus">CAGL0B00264g</name>
</gene>
<dbReference type="EMBL" id="AY207368">
    <property type="protein sequence ID" value="AAP06786.1"/>
    <property type="molecule type" value="Genomic_DNA"/>
</dbReference>
<dbReference type="EMBL" id="CR380948">
    <property type="protein sequence ID" value="CAG57881.1"/>
    <property type="molecule type" value="Genomic_DNA"/>
</dbReference>
<dbReference type="SMR" id="Q870I4"/>
<dbReference type="FunCoup" id="Q870I4">
    <property type="interactions" value="229"/>
</dbReference>
<dbReference type="EnsemblFungi" id="CAGL0B00264g-T">
    <property type="protein sequence ID" value="CAGL0B00264g-T-p1"/>
    <property type="gene ID" value="CAGL0B00264g"/>
</dbReference>
<dbReference type="KEGG" id="cgr:2886554"/>
<dbReference type="CGD" id="CAL0127028">
    <property type="gene designation" value="MTLalpha2"/>
</dbReference>
<dbReference type="VEuPathDB" id="FungiDB:B1J91_B00264g"/>
<dbReference type="VEuPathDB" id="FungiDB:CAGL0B00264g"/>
<dbReference type="eggNOG" id="KOG0773">
    <property type="taxonomic scope" value="Eukaryota"/>
</dbReference>
<dbReference type="HOGENOM" id="CLU_091806_1_0_1"/>
<dbReference type="InParanoid" id="Q870I4"/>
<dbReference type="OMA" id="RISMQKV"/>
<dbReference type="Proteomes" id="UP000002428">
    <property type="component" value="Chromosome B"/>
</dbReference>
<dbReference type="GO" id="GO:0005634">
    <property type="term" value="C:nucleus"/>
    <property type="evidence" value="ECO:0007669"/>
    <property type="project" value="UniProtKB-SubCell"/>
</dbReference>
<dbReference type="GO" id="GO:0003677">
    <property type="term" value="F:DNA binding"/>
    <property type="evidence" value="ECO:0007669"/>
    <property type="project" value="UniProtKB-KW"/>
</dbReference>
<dbReference type="GO" id="GO:0000981">
    <property type="term" value="F:DNA-binding transcription factor activity, RNA polymerase II-specific"/>
    <property type="evidence" value="ECO:0007669"/>
    <property type="project" value="InterPro"/>
</dbReference>
<dbReference type="CDD" id="cd00086">
    <property type="entry name" value="homeodomain"/>
    <property type="match status" value="1"/>
</dbReference>
<dbReference type="Gene3D" id="1.10.10.60">
    <property type="entry name" value="Homeodomain-like"/>
    <property type="match status" value="1"/>
</dbReference>
<dbReference type="InterPro" id="IPR001356">
    <property type="entry name" value="HD"/>
</dbReference>
<dbReference type="InterPro" id="IPR017970">
    <property type="entry name" value="Homeobox_CS"/>
</dbReference>
<dbReference type="InterPro" id="IPR009057">
    <property type="entry name" value="Homeodomain-like_sf"/>
</dbReference>
<dbReference type="InterPro" id="IPR050224">
    <property type="entry name" value="TALE_homeobox"/>
</dbReference>
<dbReference type="PANTHER" id="PTHR11850">
    <property type="entry name" value="HOMEOBOX PROTEIN TRANSCRIPTION FACTORS"/>
    <property type="match status" value="1"/>
</dbReference>
<dbReference type="Pfam" id="PF00046">
    <property type="entry name" value="Homeodomain"/>
    <property type="match status" value="1"/>
</dbReference>
<dbReference type="SMART" id="SM00389">
    <property type="entry name" value="HOX"/>
    <property type="match status" value="1"/>
</dbReference>
<dbReference type="SUPFAM" id="SSF46689">
    <property type="entry name" value="Homeodomain-like"/>
    <property type="match status" value="1"/>
</dbReference>
<dbReference type="PROSITE" id="PS00027">
    <property type="entry name" value="HOMEOBOX_1"/>
    <property type="match status" value="1"/>
</dbReference>
<dbReference type="PROSITE" id="PS50071">
    <property type="entry name" value="HOMEOBOX_2"/>
    <property type="match status" value="1"/>
</dbReference>